<protein>
    <recommendedName>
        <fullName evidence="1">N-acetylneuraminate epimerase</fullName>
        <ecNumber evidence="1">5.1.3.24</ecNumber>
    </recommendedName>
    <alternativeName>
        <fullName evidence="1">N-acetylneuraminate mutarotase</fullName>
        <shortName evidence="1">Neu5Ac mutarotase</shortName>
    </alternativeName>
    <alternativeName>
        <fullName evidence="1">Sialic acid epimerase</fullName>
    </alternativeName>
</protein>
<reference key="1">
    <citation type="journal article" date="2008" name="J. Bacteriol.">
        <title>The pangenome structure of Escherichia coli: comparative genomic analysis of E. coli commensal and pathogenic isolates.</title>
        <authorList>
            <person name="Rasko D.A."/>
            <person name="Rosovitz M.J."/>
            <person name="Myers G.S.A."/>
            <person name="Mongodin E.F."/>
            <person name="Fricke W.F."/>
            <person name="Gajer P."/>
            <person name="Crabtree J."/>
            <person name="Sebaihia M."/>
            <person name="Thomson N.R."/>
            <person name="Chaudhuri R."/>
            <person name="Henderson I.R."/>
            <person name="Sperandio V."/>
            <person name="Ravel J."/>
        </authorList>
    </citation>
    <scope>NUCLEOTIDE SEQUENCE [LARGE SCALE GENOMIC DNA]</scope>
    <source>
        <strain>E24377A / ETEC</strain>
    </source>
</reference>
<name>NANM_ECO24</name>
<organism>
    <name type="scientific">Escherichia coli O139:H28 (strain E24377A / ETEC)</name>
    <dbReference type="NCBI Taxonomy" id="331111"/>
    <lineage>
        <taxon>Bacteria</taxon>
        <taxon>Pseudomonadati</taxon>
        <taxon>Pseudomonadota</taxon>
        <taxon>Gammaproteobacteria</taxon>
        <taxon>Enterobacterales</taxon>
        <taxon>Enterobacteriaceae</taxon>
        <taxon>Escherichia</taxon>
    </lineage>
</organism>
<comment type="function">
    <text evidence="1">Converts alpha-N-acetylneuranimic acid (Neu5Ac) to the beta-anomer, accelerating the equilibrium between the alpha- and beta-anomers. Probably facilitates sialidase-negative bacteria to compete successfully for limited amounts of extracellular Neu5Ac, which is likely taken up in the beta-anomer. In addition, the rapid removal of sialic acid from solution might be advantageous to the bacterium to damp down host responses.</text>
</comment>
<comment type="catalytic activity">
    <reaction evidence="1">
        <text>N-acetyl-alpha-neuraminate = N-acetyl-beta-neuraminate</text>
        <dbReference type="Rhea" id="RHEA:25233"/>
        <dbReference type="ChEBI" id="CHEBI:58705"/>
        <dbReference type="ChEBI" id="CHEBI:58770"/>
        <dbReference type="EC" id="5.1.3.24"/>
    </reaction>
</comment>
<comment type="subunit">
    <text evidence="1">Homodimer.</text>
</comment>
<comment type="subcellular location">
    <subcellularLocation>
        <location evidence="1">Periplasm</location>
    </subcellularLocation>
</comment>
<comment type="similarity">
    <text evidence="1">Belongs to the NanM family.</text>
</comment>
<accession>A7ZVK8</accession>
<evidence type="ECO:0000255" key="1">
    <source>
        <dbReference type="HAMAP-Rule" id="MF_01195"/>
    </source>
</evidence>
<proteinExistence type="inferred from homology"/>
<dbReference type="EC" id="5.1.3.24" evidence="1"/>
<dbReference type="EMBL" id="CP000800">
    <property type="protein sequence ID" value="ABV19768.1"/>
    <property type="molecule type" value="Genomic_DNA"/>
</dbReference>
<dbReference type="RefSeq" id="WP_001407302.1">
    <property type="nucleotide sequence ID" value="NC_009801.1"/>
</dbReference>
<dbReference type="SMR" id="A7ZVK8"/>
<dbReference type="KEGG" id="ecw:EcE24377A_4909"/>
<dbReference type="HOGENOM" id="CLU_061535_0_0_6"/>
<dbReference type="Proteomes" id="UP000001122">
    <property type="component" value="Chromosome"/>
</dbReference>
<dbReference type="GO" id="GO:0042597">
    <property type="term" value="C:periplasmic space"/>
    <property type="evidence" value="ECO:0007669"/>
    <property type="project" value="UniProtKB-SubCell"/>
</dbReference>
<dbReference type="GO" id="GO:0016857">
    <property type="term" value="F:racemase and epimerase activity, acting on carbohydrates and derivatives"/>
    <property type="evidence" value="ECO:0007669"/>
    <property type="project" value="UniProtKB-UniRule"/>
</dbReference>
<dbReference type="FunFam" id="2.120.10.80:FF:000061">
    <property type="entry name" value="N-acetylneuraminate epimerase"/>
    <property type="match status" value="1"/>
</dbReference>
<dbReference type="FunFam" id="2.120.10.80:FF:000067">
    <property type="entry name" value="N-acetylneuraminate epimerase"/>
    <property type="match status" value="1"/>
</dbReference>
<dbReference type="Gene3D" id="2.120.10.80">
    <property type="entry name" value="Kelch-type beta propeller"/>
    <property type="match status" value="2"/>
</dbReference>
<dbReference type="HAMAP" id="MF_01195">
    <property type="entry name" value="NanM"/>
    <property type="match status" value="1"/>
</dbReference>
<dbReference type="InterPro" id="IPR015915">
    <property type="entry name" value="Kelch-typ_b-propeller"/>
</dbReference>
<dbReference type="InterPro" id="IPR056734">
    <property type="entry name" value="NANM"/>
</dbReference>
<dbReference type="InterPro" id="IPR019936">
    <property type="entry name" value="NanM_proteobact"/>
</dbReference>
<dbReference type="NCBIfam" id="TIGR03547">
    <property type="entry name" value="muta_rot_YjhT"/>
    <property type="match status" value="1"/>
</dbReference>
<dbReference type="NCBIfam" id="NF010730">
    <property type="entry name" value="PRK14131.1"/>
    <property type="match status" value="1"/>
</dbReference>
<dbReference type="PANTHER" id="PTHR45632">
    <property type="entry name" value="LD33804P"/>
    <property type="match status" value="1"/>
</dbReference>
<dbReference type="Pfam" id="PF24996">
    <property type="entry name" value="NANM"/>
    <property type="match status" value="1"/>
</dbReference>
<dbReference type="SUPFAM" id="SSF117281">
    <property type="entry name" value="Kelch motif"/>
    <property type="match status" value="1"/>
</dbReference>
<keyword id="KW-0119">Carbohydrate metabolism</keyword>
<keyword id="KW-0413">Isomerase</keyword>
<keyword id="KW-0880">Kelch repeat</keyword>
<keyword id="KW-0574">Periplasm</keyword>
<keyword id="KW-1185">Reference proteome</keyword>
<keyword id="KW-0677">Repeat</keyword>
<keyword id="KW-0732">Signal</keyword>
<gene>
    <name evidence="1" type="primary">nanM</name>
    <name type="ordered locus">EcE24377A_4909</name>
</gene>
<sequence length="368" mass="39586">MNKTITALAIIMASFAANASVLPETPVPFKSGTGAIDNDTVYIGLGSAGTAWYKLDTQAKDKKWTALAAFPGGPRDQATSAFIDGNLYVFGGIGKNSEGLTQVFNDVHKYNPKTNSWVKLMSHAPMGMAGHVTFVHNGKAYVTGGVNQNIFNGYFEDLNEAGKDSTAVDKINAYYFDKKAEDYFFNKFLLSFDPSTQQWSYAGESPWYGTAGAAVVNKGDKTWLINGEAKPGLRTDAVFELDFTGNNLKWNKLAPVSSPDGVAGGFAGISNDSLIFAGGAGFKGSRENYQNGKNYAHEGLKKSYSTDIHLWHNGKWDKSGELSQGRAYGVSLPWNNSLLIIGGETAGGKAVTDSVFISVKDNKVTVQN</sequence>
<feature type="signal peptide" evidence="1">
    <location>
        <begin position="1"/>
        <end position="19"/>
    </location>
</feature>
<feature type="chain" id="PRO_0000333054" description="N-acetylneuraminate epimerase">
    <location>
        <begin position="20"/>
        <end position="368"/>
    </location>
</feature>
<feature type="repeat" description="Kelch 1">
    <location>
        <begin position="40"/>
        <end position="84"/>
    </location>
</feature>
<feature type="repeat" description="Kelch 2">
    <location>
        <begin position="86"/>
        <end position="137"/>
    </location>
</feature>
<feature type="repeat" description="Kelch 3">
    <location>
        <begin position="139"/>
        <end position="173"/>
    </location>
</feature>
<feature type="repeat" description="Kelch 4">
    <location>
        <begin position="174"/>
        <end position="219"/>
    </location>
</feature>
<feature type="repeat" description="Kelch 5">
    <location>
        <begin position="222"/>
        <end position="265"/>
    </location>
</feature>
<feature type="repeat" description="Kelch 6">
    <location>
        <begin position="287"/>
        <end position="336"/>
    </location>
</feature>
<feature type="repeat" description="Kelch 7">
    <location>
        <begin position="338"/>
        <end position="367"/>
    </location>
</feature>
<feature type="active site" description="Proton acceptor" evidence="1">
    <location>
        <position position="228"/>
    </location>
</feature>